<reference key="1">
    <citation type="journal article" date="2001" name="Genomics">
        <title>From PREDs and open reading frames to cDNA isolation: revisiting the human chromosome 21 transcription map.</title>
        <authorList>
            <person name="Reymond A."/>
            <person name="Friedli M."/>
            <person name="Neergaard Henrichsen C."/>
            <person name="Chapot F."/>
            <person name="Deutsch S."/>
            <person name="Ucla C."/>
            <person name="Rossier C."/>
            <person name="Lyle R."/>
            <person name="Guipponi M."/>
            <person name="Antonarakis S.E."/>
        </authorList>
    </citation>
    <scope>NUCLEOTIDE SEQUENCE [MRNA] (ISOFORMS A; B AND C)</scope>
</reference>
<reference key="2">
    <citation type="journal article" date="2002" name="Genomics">
        <title>Cloning, expression, and initial characterization of a novel cytokine-like gene family.</title>
        <authorList>
            <person name="Zhu Y."/>
            <person name="Xu G."/>
            <person name="Patel A."/>
            <person name="McLaughlin M.M."/>
            <person name="Silverman C."/>
            <person name="Knecht K.A."/>
            <person name="Sweitzer S."/>
            <person name="Li X."/>
            <person name="McDonnell P."/>
            <person name="Mirabile R."/>
            <person name="Zimmerman D."/>
            <person name="Boyce R."/>
            <person name="Tierney L.A."/>
            <person name="Hu E."/>
            <person name="Livi G.P."/>
            <person name="Wolf B.A."/>
            <person name="Abdel-Meguid S.S."/>
            <person name="Rose G.D."/>
            <person name="Aurora R."/>
            <person name="Hensley P."/>
            <person name="Briggs M."/>
            <person name="Young P.R."/>
        </authorList>
    </citation>
    <scope>NUCLEOTIDE SEQUENCE [MRNA] (ISOFORM B)</scope>
    <scope>PARTIAL PROTEIN SEQUENCE</scope>
    <scope>CHARACTERIZATION</scope>
</reference>
<reference key="3">
    <citation type="journal article" date="2003" name="Genome Res.">
        <title>The secreted protein discovery initiative (SPDI), a large-scale effort to identify novel human secreted and transmembrane proteins: a bioinformatics assessment.</title>
        <authorList>
            <person name="Clark H.F."/>
            <person name="Gurney A.L."/>
            <person name="Abaya E."/>
            <person name="Baker K."/>
            <person name="Baldwin D.T."/>
            <person name="Brush J."/>
            <person name="Chen J."/>
            <person name="Chow B."/>
            <person name="Chui C."/>
            <person name="Crowley C."/>
            <person name="Currell B."/>
            <person name="Deuel B."/>
            <person name="Dowd P."/>
            <person name="Eaton D."/>
            <person name="Foster J.S."/>
            <person name="Grimaldi C."/>
            <person name="Gu Q."/>
            <person name="Hass P.E."/>
            <person name="Heldens S."/>
            <person name="Huang A."/>
            <person name="Kim H.S."/>
            <person name="Klimowski L."/>
            <person name="Jin Y."/>
            <person name="Johnson S."/>
            <person name="Lee J."/>
            <person name="Lewis L."/>
            <person name="Liao D."/>
            <person name="Mark M.R."/>
            <person name="Robbie E."/>
            <person name="Sanchez C."/>
            <person name="Schoenfeld J."/>
            <person name="Seshagiri S."/>
            <person name="Simmons L."/>
            <person name="Singh J."/>
            <person name="Smith V."/>
            <person name="Stinson J."/>
            <person name="Vagts A."/>
            <person name="Vandlen R.L."/>
            <person name="Watanabe C."/>
            <person name="Wieand D."/>
            <person name="Woods K."/>
            <person name="Xie M.-H."/>
            <person name="Yansura D.G."/>
            <person name="Yi S."/>
            <person name="Yu G."/>
            <person name="Yuan J."/>
            <person name="Zhang M."/>
            <person name="Zhang Z."/>
            <person name="Goddard A.D."/>
            <person name="Wood W.I."/>
            <person name="Godowski P.J."/>
            <person name="Gray A.M."/>
        </authorList>
    </citation>
    <scope>NUCLEOTIDE SEQUENCE [LARGE SCALE MRNA] (ISOFORM B)</scope>
</reference>
<reference key="4">
    <citation type="journal article" date="2004" name="Genome Res.">
        <title>The status, quality, and expansion of the NIH full-length cDNA project: the Mammalian Gene Collection (MGC).</title>
        <authorList>
            <consortium name="The MGC Project Team"/>
        </authorList>
    </citation>
    <scope>NUCLEOTIDE SEQUENCE [LARGE SCALE MRNA] (ISOFORM B)</scope>
    <source>
        <tissue>Placenta</tissue>
    </source>
</reference>
<reference key="5">
    <citation type="journal article" date="2005" name="Biochemistry">
        <title>Structure-function studies of PANDER, an islet specific cytokine inducing cell death of insulin-secreting beta cells.</title>
        <authorList>
            <person name="Yang J."/>
            <person name="Gao Z."/>
            <person name="Robert C.E."/>
            <person name="Burkhardt B.R."/>
            <person name="Gaweska H."/>
            <person name="Wagner A."/>
            <person name="Wu J."/>
            <person name="Greene S.R."/>
            <person name="Young R.A."/>
            <person name="Wolf B.A."/>
        </authorList>
    </citation>
    <scope>FUNCTION</scope>
    <scope>TISSUE SPECIFICITY</scope>
    <scope>DISULFIDE BONDS</scope>
</reference>
<protein>
    <recommendedName>
        <fullName>Protein FAM3B</fullName>
    </recommendedName>
    <alternativeName>
        <fullName>Cytokine-like protein 2-21</fullName>
    </alternativeName>
    <alternativeName>
        <fullName>Pancreatic-derived factor</fullName>
        <shortName>PANDER</shortName>
    </alternativeName>
</protein>
<organism>
    <name type="scientific">Homo sapiens</name>
    <name type="common">Human</name>
    <dbReference type="NCBI Taxonomy" id="9606"/>
    <lineage>
        <taxon>Eukaryota</taxon>
        <taxon>Metazoa</taxon>
        <taxon>Chordata</taxon>
        <taxon>Craniata</taxon>
        <taxon>Vertebrata</taxon>
        <taxon>Euteleostomi</taxon>
        <taxon>Mammalia</taxon>
        <taxon>Eutheria</taxon>
        <taxon>Euarchontoglires</taxon>
        <taxon>Primates</taxon>
        <taxon>Haplorrhini</taxon>
        <taxon>Catarrhini</taxon>
        <taxon>Hominidae</taxon>
        <taxon>Homo</taxon>
    </lineage>
</organism>
<keyword id="KW-0025">Alternative splicing</keyword>
<keyword id="KW-0053">Apoptosis</keyword>
<keyword id="KW-0202">Cytokine</keyword>
<keyword id="KW-0903">Direct protein sequencing</keyword>
<keyword id="KW-1015">Disulfide bond</keyword>
<keyword id="KW-0325">Glycoprotein</keyword>
<keyword id="KW-0430">Lectin</keyword>
<keyword id="KW-1267">Proteomics identification</keyword>
<keyword id="KW-1185">Reference proteome</keyword>
<keyword id="KW-0964">Secreted</keyword>
<keyword id="KW-0732">Signal</keyword>
<name>FAM3B_HUMAN</name>
<gene>
    <name type="primary">FAM3B</name>
    <name type="synonym">C21orf11</name>
    <name type="synonym">C21orf76</name>
    <name type="ORF">PRED44</name>
    <name type="ORF">UNQ320/PRO365</name>
</gene>
<feature type="signal peptide">
    <location>
        <begin position="1"/>
        <end position="29"/>
    </location>
</feature>
<feature type="chain" id="PRO_0000008750" description="Protein FAM3B">
    <location>
        <begin position="30"/>
        <end position="235"/>
    </location>
</feature>
<feature type="domain" description="GG-type lectin" evidence="3">
    <location>
        <begin position="72"/>
        <end position="233"/>
    </location>
</feature>
<feature type="glycosylation site" description="N-linked (GlcNAc...) asparagine" evidence="2">
    <location>
        <position position="120"/>
    </location>
</feature>
<feature type="glycosylation site" description="N-linked (GlcNAc...) asparagine" evidence="2">
    <location>
        <position position="208"/>
    </location>
</feature>
<feature type="disulfide bond" evidence="1">
    <location>
        <begin position="63"/>
        <end position="91"/>
    </location>
</feature>
<feature type="disulfide bond" evidence="1">
    <location>
        <begin position="69"/>
        <end position="229"/>
    </location>
</feature>
<feature type="splice variant" id="VSP_001505" description="In isoform C." evidence="5">
    <location>
        <begin position="7"/>
        <end position="54"/>
    </location>
</feature>
<feature type="splice variant" id="VSP_001504" description="In isoform A." evidence="5">
    <original>G</original>
    <variation>GSRWACWLTRCLISCFDINVQGRLLVKLRPKPTANTTCPG</variation>
    <location>
        <position position="7"/>
    </location>
</feature>
<feature type="sequence variant" id="VAR_021953" description="In dbSNP:rs2838012.">
    <original>V</original>
    <variation>M</variation>
    <location>
        <position position="14"/>
    </location>
</feature>
<evidence type="ECO:0000250" key="1"/>
<evidence type="ECO:0000255" key="2"/>
<evidence type="ECO:0000255" key="3">
    <source>
        <dbReference type="PROSITE-ProRule" id="PRU01375"/>
    </source>
</evidence>
<evidence type="ECO:0000269" key="4">
    <source>
    </source>
</evidence>
<evidence type="ECO:0000303" key="5">
    <source>
    </source>
</evidence>
<evidence type="ECO:0000305" key="6"/>
<proteinExistence type="evidence at protein level"/>
<comment type="function">
    <text evidence="4">Induces apoptosis of alpha and beta cells in a dose- and time-dependent manner.</text>
</comment>
<comment type="interaction">
    <interactant intactId="EBI-12955347">
        <id>P58499</id>
    </interactant>
    <interactant intactId="EBI-12839380">
        <id>P21217</id>
        <label>FUT3</label>
    </interactant>
    <organismsDiffer>false</organismsDiffer>
    <experiments>4</experiments>
</comment>
<comment type="interaction">
    <interactant intactId="EBI-12955347">
        <id>P58499</id>
    </interactant>
    <interactant intactId="EBI-1955541">
        <id>Q53GS7</id>
        <label>GLE1</label>
    </interactant>
    <organismsDiffer>false</organismsDiffer>
    <experiments>3</experiments>
</comment>
<comment type="interaction">
    <interactant intactId="EBI-12955347">
        <id>P58499</id>
    </interactant>
    <interactant intactId="EBI-351935">
        <id>P02545</id>
        <label>LMNA</label>
    </interactant>
    <organismsDiffer>false</organismsDiffer>
    <experiments>3</experiments>
</comment>
<comment type="subcellular location">
    <subcellularLocation>
        <location>Secreted</location>
    </subcellularLocation>
    <text>Present in insulin secretory granules and likely cosecreted with insulin. Localized in discrete vesicular and perinuclear structure.</text>
</comment>
<comment type="alternative products">
    <event type="alternative splicing"/>
    <isoform>
        <id>P58499-1</id>
        <name>B</name>
        <sequence type="displayed"/>
    </isoform>
    <isoform>
        <id>P58499-2</id>
        <name>A</name>
        <sequence type="described" ref="VSP_001504"/>
    </isoform>
    <isoform>
        <id>P58499-3</id>
        <name>C</name>
        <sequence type="described" ref="VSP_001505"/>
    </isoform>
</comment>
<comment type="tissue specificity">
    <text evidence="4">Highly expressed in the pancreas. Also found in the colon, kidney, prostate, small intestine and testis.</text>
</comment>
<comment type="PTM">
    <text>2 N-termini have been observed in the mature protein: the first at Glu-30, resulting from signal peptide cleavage, the second at Ser-46.</text>
</comment>
<comment type="PTM">
    <text evidence="1">O-glycosylated.</text>
</comment>
<comment type="similarity">
    <text evidence="6">Belongs to the FAM3 family.</text>
</comment>
<dbReference type="EMBL" id="AJ409094">
    <property type="protein sequence ID" value="CAC83974.1"/>
    <property type="molecule type" value="mRNA"/>
</dbReference>
<dbReference type="EMBL" id="AF375989">
    <property type="protein sequence ID" value="AAL34495.1"/>
    <property type="molecule type" value="mRNA"/>
</dbReference>
<dbReference type="EMBL" id="AY040086">
    <property type="protein sequence ID" value="AAK74134.1"/>
    <property type="molecule type" value="mRNA"/>
</dbReference>
<dbReference type="EMBL" id="AF494379">
    <property type="protein sequence ID" value="AAM94280.1"/>
    <property type="molecule type" value="mRNA"/>
</dbReference>
<dbReference type="EMBL" id="AY358459">
    <property type="protein sequence ID" value="AAQ88824.1"/>
    <property type="molecule type" value="mRNA"/>
</dbReference>
<dbReference type="EMBL" id="BC057829">
    <property type="protein sequence ID" value="AAH57829.1"/>
    <property type="molecule type" value="mRNA"/>
</dbReference>
<dbReference type="CCDS" id="CCDS13671.1">
    <molecule id="P58499-1"/>
</dbReference>
<dbReference type="CCDS" id="CCDS42930.1">
    <molecule id="P58499-3"/>
</dbReference>
<dbReference type="RefSeq" id="NP_478066.3">
    <molecule id="P58499-1"/>
    <property type="nucleotide sequence ID" value="NM_058186.3"/>
</dbReference>
<dbReference type="RefSeq" id="NP_996847.1">
    <molecule id="P58499-3"/>
    <property type="nucleotide sequence ID" value="NM_206964.2"/>
</dbReference>
<dbReference type="SMR" id="P58499"/>
<dbReference type="BioGRID" id="119895">
    <property type="interactions" value="13"/>
</dbReference>
<dbReference type="FunCoup" id="P58499">
    <property type="interactions" value="141"/>
</dbReference>
<dbReference type="IntAct" id="P58499">
    <property type="interactions" value="12"/>
</dbReference>
<dbReference type="STRING" id="9606.ENSP00000350673"/>
<dbReference type="GlyCosmos" id="P58499">
    <property type="glycosylation" value="2 sites, No reported glycans"/>
</dbReference>
<dbReference type="GlyGen" id="P58499">
    <property type="glycosylation" value="2 sites"/>
</dbReference>
<dbReference type="iPTMnet" id="P58499"/>
<dbReference type="PhosphoSitePlus" id="P58499"/>
<dbReference type="BioMuta" id="FAM3B"/>
<dbReference type="jPOST" id="P58499"/>
<dbReference type="MassIVE" id="P58499"/>
<dbReference type="PaxDb" id="9606-ENSP00000350673"/>
<dbReference type="PeptideAtlas" id="P58499"/>
<dbReference type="ProteomicsDB" id="57077">
    <molecule id="P58499-1"/>
</dbReference>
<dbReference type="ProteomicsDB" id="57078">
    <molecule id="P58499-2"/>
</dbReference>
<dbReference type="ProteomicsDB" id="57079">
    <molecule id="P58499-3"/>
</dbReference>
<dbReference type="Antibodypedia" id="2683">
    <property type="antibodies" value="303 antibodies from 29 providers"/>
</dbReference>
<dbReference type="DNASU" id="54097"/>
<dbReference type="Ensembl" id="ENST00000357985.7">
    <molecule id="P58499-1"/>
    <property type="protein sequence ID" value="ENSP00000350673.2"/>
    <property type="gene ID" value="ENSG00000183844.17"/>
</dbReference>
<dbReference type="Ensembl" id="ENST00000398647.7">
    <molecule id="P58499-3"/>
    <property type="protein sequence ID" value="ENSP00000381642.3"/>
    <property type="gene ID" value="ENSG00000183844.17"/>
</dbReference>
<dbReference type="Ensembl" id="ENST00000398652.7">
    <molecule id="P58499-2"/>
    <property type="protein sequence ID" value="ENSP00000381646.3"/>
    <property type="gene ID" value="ENSG00000183844.17"/>
</dbReference>
<dbReference type="GeneID" id="54097"/>
<dbReference type="KEGG" id="hsa:54097"/>
<dbReference type="MANE-Select" id="ENST00000357985.7">
    <property type="protein sequence ID" value="ENSP00000350673.2"/>
    <property type="RefSeq nucleotide sequence ID" value="NM_058186.4"/>
    <property type="RefSeq protein sequence ID" value="NP_478066.3"/>
</dbReference>
<dbReference type="UCSC" id="uc002yzb.2">
    <molecule id="P58499-1"/>
    <property type="organism name" value="human"/>
</dbReference>
<dbReference type="AGR" id="HGNC:1253"/>
<dbReference type="CTD" id="54097"/>
<dbReference type="DisGeNET" id="54097"/>
<dbReference type="GeneCards" id="FAM3B"/>
<dbReference type="HGNC" id="HGNC:1253">
    <property type="gene designation" value="FAM3B"/>
</dbReference>
<dbReference type="HPA" id="ENSG00000183844">
    <property type="expression patterns" value="Tissue enhanced (intestine, pancreas, salivary gland, stomach)"/>
</dbReference>
<dbReference type="MIM" id="608617">
    <property type="type" value="gene"/>
</dbReference>
<dbReference type="neXtProt" id="NX_P58499"/>
<dbReference type="OpenTargets" id="ENSG00000183844"/>
<dbReference type="PharmGKB" id="PA27979"/>
<dbReference type="VEuPathDB" id="HostDB:ENSG00000183844"/>
<dbReference type="eggNOG" id="ENOG502QW7Y">
    <property type="taxonomic scope" value="Eukaryota"/>
</dbReference>
<dbReference type="GeneTree" id="ENSGT00950000183004"/>
<dbReference type="HOGENOM" id="CLU_099478_1_1_1"/>
<dbReference type="InParanoid" id="P58499"/>
<dbReference type="OMA" id="FPKICFE"/>
<dbReference type="OrthoDB" id="440755at2759"/>
<dbReference type="PAN-GO" id="P58499">
    <property type="GO annotations" value="2 GO annotations based on evolutionary models"/>
</dbReference>
<dbReference type="PhylomeDB" id="P58499"/>
<dbReference type="TreeFam" id="TF353414"/>
<dbReference type="PathwayCommons" id="P58499"/>
<dbReference type="SignaLink" id="P58499"/>
<dbReference type="BioGRID-ORCS" id="54097">
    <property type="hits" value="10 hits in 1145 CRISPR screens"/>
</dbReference>
<dbReference type="ChiTaRS" id="FAM3B">
    <property type="organism name" value="human"/>
</dbReference>
<dbReference type="GeneWiki" id="FAM3B"/>
<dbReference type="GenomeRNAi" id="54097"/>
<dbReference type="Pharos" id="P58499">
    <property type="development level" value="Tbio"/>
</dbReference>
<dbReference type="PRO" id="PR:P58499"/>
<dbReference type="Proteomes" id="UP000005640">
    <property type="component" value="Chromosome 21"/>
</dbReference>
<dbReference type="RNAct" id="P58499">
    <property type="molecule type" value="protein"/>
</dbReference>
<dbReference type="Bgee" id="ENSG00000183844">
    <property type="expression patterns" value="Expressed in ileal mucosa and 130 other cell types or tissues"/>
</dbReference>
<dbReference type="ExpressionAtlas" id="P58499">
    <property type="expression patterns" value="baseline and differential"/>
</dbReference>
<dbReference type="GO" id="GO:0070062">
    <property type="term" value="C:extracellular exosome"/>
    <property type="evidence" value="ECO:0007005"/>
    <property type="project" value="UniProtKB"/>
</dbReference>
<dbReference type="GO" id="GO:0005576">
    <property type="term" value="C:extracellular region"/>
    <property type="evidence" value="ECO:0000303"/>
    <property type="project" value="UniProtKB"/>
</dbReference>
<dbReference type="GO" id="GO:0005615">
    <property type="term" value="C:extracellular space"/>
    <property type="evidence" value="ECO:0000318"/>
    <property type="project" value="GO_Central"/>
</dbReference>
<dbReference type="GO" id="GO:0030246">
    <property type="term" value="F:carbohydrate binding"/>
    <property type="evidence" value="ECO:0007669"/>
    <property type="project" value="UniProtKB-KW"/>
</dbReference>
<dbReference type="GO" id="GO:0005125">
    <property type="term" value="F:cytokine activity"/>
    <property type="evidence" value="ECO:0000303"/>
    <property type="project" value="UniProtKB"/>
</dbReference>
<dbReference type="GO" id="GO:0006915">
    <property type="term" value="P:apoptotic process"/>
    <property type="evidence" value="ECO:0007669"/>
    <property type="project" value="UniProtKB-KW"/>
</dbReference>
<dbReference type="GO" id="GO:0030073">
    <property type="term" value="P:insulin secretion"/>
    <property type="evidence" value="ECO:0000314"/>
    <property type="project" value="UniProtKB"/>
</dbReference>
<dbReference type="InterPro" id="IPR039220">
    <property type="entry name" value="FAM3"/>
</dbReference>
<dbReference type="InterPro" id="IPR039477">
    <property type="entry name" value="ILEI/PANDER_dom"/>
</dbReference>
<dbReference type="PANTHER" id="PTHR14592">
    <property type="entry name" value="UNCHARACTERIZED FAM3"/>
    <property type="match status" value="1"/>
</dbReference>
<dbReference type="Pfam" id="PF15711">
    <property type="entry name" value="ILEI"/>
    <property type="match status" value="1"/>
</dbReference>
<dbReference type="PROSITE" id="PS52031">
    <property type="entry name" value="GG_LECTIN"/>
    <property type="match status" value="1"/>
</dbReference>
<accession>P58499</accession>
<sequence length="235" mass="25982">MRPLAGGLLKVVFVVFASLCAWYSGYLLAELIPDAPLSSAAYSIRSIGERPVLKAPVPKRQKCDHWTPCPSDTYAYRLLSGGGRSKYAKICFEDNLLMGEQLGNVARGINIAIVNYVTGNVTATRCFDMYEGDNSGPMTKFIQSAAPKSLLFMVTYDDGSTRLNNDAKNAIEALGSKEIRNMKFRSSWVFIAAKGLELPSEIQREKINHSDAKNNRYSGWPAEIQIEGCIPKERS</sequence>